<dbReference type="EC" id="3.6.1.41" evidence="1"/>
<dbReference type="EMBL" id="CP000822">
    <property type="protein sequence ID" value="ABV14414.1"/>
    <property type="molecule type" value="Genomic_DNA"/>
</dbReference>
<dbReference type="RefSeq" id="WP_012134118.1">
    <property type="nucleotide sequence ID" value="NC_009792.1"/>
</dbReference>
<dbReference type="SMR" id="A8ALQ2"/>
<dbReference type="STRING" id="290338.CKO_03331"/>
<dbReference type="GeneID" id="45137096"/>
<dbReference type="KEGG" id="cko:CKO_03331"/>
<dbReference type="HOGENOM" id="CLU_056184_2_0_6"/>
<dbReference type="OrthoDB" id="9807890at2"/>
<dbReference type="Proteomes" id="UP000008148">
    <property type="component" value="Chromosome"/>
</dbReference>
<dbReference type="GO" id="GO:0008803">
    <property type="term" value="F:bis(5'-nucleosyl)-tetraphosphatase (symmetrical) activity"/>
    <property type="evidence" value="ECO:0007669"/>
    <property type="project" value="UniProtKB-UniRule"/>
</dbReference>
<dbReference type="CDD" id="cd07422">
    <property type="entry name" value="MPP_ApaH"/>
    <property type="match status" value="1"/>
</dbReference>
<dbReference type="FunFam" id="3.60.21.10:FF:000013">
    <property type="entry name" value="Bis(5'-nucleosyl)-tetraphosphatase, symmetrical"/>
    <property type="match status" value="1"/>
</dbReference>
<dbReference type="Gene3D" id="3.60.21.10">
    <property type="match status" value="1"/>
</dbReference>
<dbReference type="HAMAP" id="MF_00199">
    <property type="entry name" value="ApaH"/>
    <property type="match status" value="1"/>
</dbReference>
<dbReference type="InterPro" id="IPR004617">
    <property type="entry name" value="ApaH"/>
</dbReference>
<dbReference type="InterPro" id="IPR004843">
    <property type="entry name" value="Calcineurin-like_PHP_ApaH"/>
</dbReference>
<dbReference type="InterPro" id="IPR029052">
    <property type="entry name" value="Metallo-depent_PP-like"/>
</dbReference>
<dbReference type="NCBIfam" id="TIGR00668">
    <property type="entry name" value="apaH"/>
    <property type="match status" value="1"/>
</dbReference>
<dbReference type="NCBIfam" id="NF001204">
    <property type="entry name" value="PRK00166.1"/>
    <property type="match status" value="1"/>
</dbReference>
<dbReference type="PANTHER" id="PTHR40942">
    <property type="match status" value="1"/>
</dbReference>
<dbReference type="PANTHER" id="PTHR40942:SF4">
    <property type="entry name" value="CYTOCHROME C5"/>
    <property type="match status" value="1"/>
</dbReference>
<dbReference type="Pfam" id="PF00149">
    <property type="entry name" value="Metallophos"/>
    <property type="match status" value="1"/>
</dbReference>
<dbReference type="PIRSF" id="PIRSF000903">
    <property type="entry name" value="B5n-ttraPtase_sm"/>
    <property type="match status" value="1"/>
</dbReference>
<dbReference type="SUPFAM" id="SSF56300">
    <property type="entry name" value="Metallo-dependent phosphatases"/>
    <property type="match status" value="1"/>
</dbReference>
<protein>
    <recommendedName>
        <fullName evidence="1">Bis(5'-nucleosyl)-tetraphosphatase, symmetrical</fullName>
        <ecNumber evidence="1">3.6.1.41</ecNumber>
    </recommendedName>
    <alternativeName>
        <fullName evidence="1">Ap4A hydrolase</fullName>
    </alternativeName>
    <alternativeName>
        <fullName evidence="1">Diadenosine 5',5'''-P1,P4-tetraphosphate pyrophosphohydrolase</fullName>
    </alternativeName>
    <alternativeName>
        <fullName evidence="1">Diadenosine tetraphosphatase</fullName>
    </alternativeName>
</protein>
<evidence type="ECO:0000255" key="1">
    <source>
        <dbReference type="HAMAP-Rule" id="MF_00199"/>
    </source>
</evidence>
<accession>A8ALQ2</accession>
<feature type="chain" id="PRO_1000012054" description="Bis(5'-nucleosyl)-tetraphosphatase, symmetrical">
    <location>
        <begin position="1"/>
        <end position="282"/>
    </location>
</feature>
<comment type="function">
    <text evidence="1">Hydrolyzes diadenosine 5',5'''-P1,P4-tetraphosphate to yield ADP.</text>
</comment>
<comment type="catalytic activity">
    <reaction evidence="1">
        <text>P(1),P(4)-bis(5'-adenosyl) tetraphosphate + H2O = 2 ADP + 2 H(+)</text>
        <dbReference type="Rhea" id="RHEA:24252"/>
        <dbReference type="ChEBI" id="CHEBI:15377"/>
        <dbReference type="ChEBI" id="CHEBI:15378"/>
        <dbReference type="ChEBI" id="CHEBI:58141"/>
        <dbReference type="ChEBI" id="CHEBI:456216"/>
        <dbReference type="EC" id="3.6.1.41"/>
    </reaction>
</comment>
<comment type="similarity">
    <text evidence="1">Belongs to the Ap4A hydrolase family.</text>
</comment>
<reference key="1">
    <citation type="submission" date="2007-08" db="EMBL/GenBank/DDBJ databases">
        <authorList>
            <consortium name="The Citrobacter koseri Genome Sequencing Project"/>
            <person name="McClelland M."/>
            <person name="Sanderson E.K."/>
            <person name="Porwollik S."/>
            <person name="Spieth J."/>
            <person name="Clifton W.S."/>
            <person name="Latreille P."/>
            <person name="Courtney L."/>
            <person name="Wang C."/>
            <person name="Pepin K."/>
            <person name="Bhonagiri V."/>
            <person name="Nash W."/>
            <person name="Johnson M."/>
            <person name="Thiruvilangam P."/>
            <person name="Wilson R."/>
        </authorList>
    </citation>
    <scope>NUCLEOTIDE SEQUENCE [LARGE SCALE GENOMIC DNA]</scope>
    <source>
        <strain>ATCC BAA-895 / CDC 4225-83 / SGSC4696</strain>
    </source>
</reference>
<organism>
    <name type="scientific">Citrobacter koseri (strain ATCC BAA-895 / CDC 4225-83 / SGSC4696)</name>
    <dbReference type="NCBI Taxonomy" id="290338"/>
    <lineage>
        <taxon>Bacteria</taxon>
        <taxon>Pseudomonadati</taxon>
        <taxon>Pseudomonadota</taxon>
        <taxon>Gammaproteobacteria</taxon>
        <taxon>Enterobacterales</taxon>
        <taxon>Enterobacteriaceae</taxon>
        <taxon>Citrobacter</taxon>
    </lineage>
</organism>
<gene>
    <name evidence="1" type="primary">apaH</name>
    <name type="ordered locus">CKO_03331</name>
</gene>
<proteinExistence type="inferred from homology"/>
<name>APAH_CITK8</name>
<keyword id="KW-0378">Hydrolase</keyword>
<keyword id="KW-1185">Reference proteome</keyword>
<sequence length="282" mass="31445">MATYLIGDVHGCYDELIALLHQVEFTPGSDTLWLTGDLVARGPGSLEVLRYVKSLGDCVRLVLGNHDLHLLAVFAGISRNKPKDRLTPLLEAPDADELLNWLRRQPLLQVDEEKKLVMAHAGITPQWDLQTAKDCARDVEAVLSSDSYPFFLDAMYGDMPNNWTPELTGLARLRFITNAFTRMRYCFPNGQLDMYSKESPENAPAPLKPWFAIPGPVSEAYSIVFGHWASLEGKGTPEGIYGLDTGCCWGGDLTCLRWEDKRYFVQPSNRHLDSGKGEAVNA</sequence>